<keyword id="KW-0002">3D-structure</keyword>
<keyword id="KW-0020">Allergen</keyword>
<keyword id="KW-0903">Direct protein sequencing</keyword>
<keyword id="KW-1015">Disulfide bond</keyword>
<keyword id="KW-0325">Glycoprotein</keyword>
<keyword id="KW-1185">Reference proteome</keyword>
<keyword id="KW-0964">Secreted</keyword>
<keyword id="KW-0732">Signal</keyword>
<gene>
    <name type="primary">LATH</name>
</gene>
<reference key="1">
    <citation type="submission" date="2007-03" db="EMBL/GenBank/DDBJ databases">
        <title>Latherin -- the surfactant protein and allergen of horse sweat.</title>
        <authorList>
            <person name="Fleming R.I."/>
            <person name="Beeley J.G."/>
            <person name="Cooper A."/>
            <person name="Jones J.T."/>
            <person name="Matthews J.B."/>
            <person name="Kennedy M.W."/>
        </authorList>
    </citation>
    <scope>NUCLEOTIDE SEQUENCE [MRNA]</scope>
    <source>
        <tissue>Sweat gland</tissue>
    </source>
</reference>
<reference key="2">
    <citation type="journal article" date="2001" name="Eur. J. Biochem.">
        <title>Biochemical characterization and surfactant properties of horse allergens.</title>
        <authorList>
            <person name="Goubran Botros H."/>
            <person name="Poncet P."/>
            <person name="Rabillon J."/>
            <person name="Fontaine T."/>
            <person name="Laval J.-M."/>
            <person name="David B."/>
        </authorList>
    </citation>
    <scope>PROTEIN SEQUENCE OF 76-129 AND 148-158</scope>
    <scope>GLYCOSYLATION</scope>
    <scope>ALLERGEN</scope>
    <source>
        <tissue>Dander</tissue>
    </source>
</reference>
<reference key="3">
    <citation type="journal article" date="1986" name="Biochem. J.">
        <title>Isolation and characterization of latherin, a surface-active protein from horse sweat.</title>
        <authorList>
            <person name="Beeley J.G."/>
            <person name="Eason R."/>
            <person name="Snow D.H."/>
        </authorList>
    </citation>
    <scope>FUNCTION</scope>
    <scope>TISSUE SPECIFICITY</scope>
</reference>
<reference key="4">
    <citation type="journal article" date="2013" name="J. R. Soc. Interface">
        <title>The structure of latherin, a surfactant allergen protein from horse sweat and saliva.</title>
        <authorList>
            <person name="Vance S.J."/>
            <person name="McDonald R.E."/>
            <person name="Cooper A."/>
            <person name="Smith B.O."/>
            <person name="Kennedy M.W."/>
        </authorList>
    </citation>
    <scope>STRUCTURE BY NMR OF 20-228</scope>
    <scope>SUBUNIT</scope>
    <scope>DISULFIDE BOND</scope>
</reference>
<sequence>MLKVSCLFVLLCGLLVPSSAQQIPPEVSSQITDALTQGLLDGNFLSLLNAINLEGLLNTILDQVTGLLNILVGPLLGPSDAEIKLQDTRLLQLSLEFSPDSKGIDIWIPLELSVYLKLLILEPLTLYVRTDIRVQLRLESDEDGKYRLAFGHCSLLPRAIELQSGNPLSLPVNAVLGTIENALGNFITEDLGAGLCPTLNSLVSNLDLQLVNNLINLILDRANVDLSV</sequence>
<comment type="function">
    <text evidence="4">Major protein in sweat, has surfactant properties. Has a role in temperature regulation by having a capacity to make hydrophobic surfaces wettable and so can function in promoting spreading and evaporation of sweat.</text>
</comment>
<comment type="subunit">
    <text evidence="3">Monomer.</text>
</comment>
<comment type="subcellular location">
    <subcellularLocation>
        <location evidence="5">Secreted</location>
    </subcellularLocation>
</comment>
<comment type="tissue specificity">
    <text evidence="4">Found in sweat (at protein level).</text>
</comment>
<comment type="PTM">
    <text evidence="2">No sign of N-X-[ST] acceptor site even though reported as N-glycosylated.</text>
</comment>
<comment type="allergen">
    <text evidence="2">Causes an allergic reaction in human. Allergen of horse dander.</text>
</comment>
<comment type="similarity">
    <text evidence="5">Belongs to the BPI/LBP/Plunc superfamily. Plunc family.</text>
</comment>
<feature type="signal peptide" evidence="1">
    <location>
        <begin position="1"/>
        <end position="20"/>
    </location>
</feature>
<feature type="chain" id="PRO_0000017190" description="Latherin">
    <location>
        <begin position="21"/>
        <end position="228"/>
    </location>
</feature>
<feature type="disulfide bond" evidence="3">
    <location>
        <begin position="153"/>
        <end position="196"/>
    </location>
</feature>
<feature type="sequence conflict" description="In Ref. 2; AA sequence." evidence="5" ref="2">
    <original>T</original>
    <variation>A</variation>
    <location>
        <position position="88"/>
    </location>
</feature>
<feature type="helix" evidence="6">
    <location>
        <begin position="25"/>
        <end position="41"/>
    </location>
</feature>
<feature type="helix" evidence="6">
    <location>
        <begin position="44"/>
        <end position="50"/>
    </location>
</feature>
<feature type="helix" evidence="6">
    <location>
        <begin position="54"/>
        <end position="64"/>
    </location>
</feature>
<feature type="turn" evidence="6">
    <location>
        <begin position="65"/>
        <end position="67"/>
    </location>
</feature>
<feature type="turn" evidence="6">
    <location>
        <begin position="69"/>
        <end position="71"/>
    </location>
</feature>
<feature type="strand" evidence="6">
    <location>
        <begin position="81"/>
        <end position="85"/>
    </location>
</feature>
<feature type="strand" evidence="6">
    <location>
        <begin position="94"/>
        <end position="97"/>
    </location>
</feature>
<feature type="strand" evidence="6">
    <location>
        <begin position="99"/>
        <end position="121"/>
    </location>
</feature>
<feature type="strand" evidence="6">
    <location>
        <begin position="124"/>
        <end position="140"/>
    </location>
</feature>
<feature type="strand" evidence="6">
    <location>
        <begin position="146"/>
        <end position="164"/>
    </location>
</feature>
<feature type="strand" evidence="6">
    <location>
        <begin position="167"/>
        <end position="170"/>
    </location>
</feature>
<feature type="helix" evidence="6">
    <location>
        <begin position="171"/>
        <end position="174"/>
    </location>
</feature>
<feature type="helix" evidence="6">
    <location>
        <begin position="177"/>
        <end position="188"/>
    </location>
</feature>
<feature type="helix" evidence="6">
    <location>
        <begin position="191"/>
        <end position="194"/>
    </location>
</feature>
<feature type="helix" evidence="6">
    <location>
        <begin position="196"/>
        <end position="202"/>
    </location>
</feature>
<feature type="turn" evidence="6">
    <location>
        <begin position="203"/>
        <end position="205"/>
    </location>
</feature>
<feature type="helix" evidence="6">
    <location>
        <begin position="208"/>
        <end position="223"/>
    </location>
</feature>
<dbReference type="EMBL" id="AF491288">
    <property type="protein sequence ID" value="AAM09530.3"/>
    <property type="molecule type" value="mRNA"/>
</dbReference>
<dbReference type="RefSeq" id="NP_001075328.2">
    <property type="nucleotide sequence ID" value="NM_001081859.2"/>
</dbReference>
<dbReference type="PDB" id="3ZPM">
    <property type="method" value="NMR"/>
    <property type="chains" value="A=21-228"/>
</dbReference>
<dbReference type="PDBsum" id="3ZPM"/>
<dbReference type="BMRB" id="P82615"/>
<dbReference type="SMR" id="P82615"/>
<dbReference type="STRING" id="9796.ENSECAP00000037152"/>
<dbReference type="Allergome" id="3303">
    <property type="allergen name" value="Equ c 4.0101"/>
</dbReference>
<dbReference type="Allergome" id="336">
    <property type="allergen name" value="Equ c 4"/>
</dbReference>
<dbReference type="PaxDb" id="9796-ENSECAP00000037152"/>
<dbReference type="PeptideAtlas" id="P82615"/>
<dbReference type="GeneID" id="100033921"/>
<dbReference type="KEGG" id="ecb:100033921"/>
<dbReference type="CTD" id="100033921"/>
<dbReference type="InParanoid" id="P82615"/>
<dbReference type="OrthoDB" id="9521644at2759"/>
<dbReference type="EvolutionaryTrace" id="P82615"/>
<dbReference type="Proteomes" id="UP000002281">
    <property type="component" value="Unplaced"/>
</dbReference>
<dbReference type="GO" id="GO:0005576">
    <property type="term" value="C:extracellular region"/>
    <property type="evidence" value="ECO:0007669"/>
    <property type="project" value="UniProtKB-SubCell"/>
</dbReference>
<dbReference type="GO" id="GO:0008289">
    <property type="term" value="F:lipid binding"/>
    <property type="evidence" value="ECO:0007669"/>
    <property type="project" value="InterPro"/>
</dbReference>
<dbReference type="GO" id="GO:0043129">
    <property type="term" value="P:surfactant homeostasis"/>
    <property type="evidence" value="ECO:0000314"/>
    <property type="project" value="CACAO"/>
</dbReference>
<dbReference type="GO" id="GO:0001659">
    <property type="term" value="P:temperature homeostasis"/>
    <property type="evidence" value="ECO:0000314"/>
    <property type="project" value="CACAO"/>
</dbReference>
<dbReference type="FunFam" id="3.15.10.10:FF:000011">
    <property type="entry name" value="Latherin"/>
    <property type="match status" value="1"/>
</dbReference>
<dbReference type="Gene3D" id="3.15.10.10">
    <property type="entry name" value="Bactericidal permeability-increasing protein, domain 1"/>
    <property type="match status" value="1"/>
</dbReference>
<dbReference type="InterPro" id="IPR017943">
    <property type="entry name" value="Bactericidal_perm-incr_a/b_dom"/>
</dbReference>
<dbReference type="InterPro" id="IPR051902">
    <property type="entry name" value="BPI_fold-superfamily_member"/>
</dbReference>
<dbReference type="InterPro" id="IPR017942">
    <property type="entry name" value="Lipid-bd_serum_glycop_N"/>
</dbReference>
<dbReference type="PANTHER" id="PTHR47015">
    <property type="entry name" value="BPI FOLD-CONTAINING FAMILY A MEMBER 1"/>
    <property type="match status" value="1"/>
</dbReference>
<dbReference type="PANTHER" id="PTHR47015:SF3">
    <property type="entry name" value="BPIFA4P PROTEIN-RELATED"/>
    <property type="match status" value="1"/>
</dbReference>
<dbReference type="Pfam" id="PF01273">
    <property type="entry name" value="LBP_BPI_CETP"/>
    <property type="match status" value="1"/>
</dbReference>
<dbReference type="SUPFAM" id="SSF55394">
    <property type="entry name" value="Bactericidal permeability-increasing protein, BPI"/>
    <property type="match status" value="1"/>
</dbReference>
<protein>
    <recommendedName>
        <fullName>Latherin</fullName>
    </recommendedName>
    <alternativeName>
        <fullName>Dander allergen Equ c 4/Equ c 5</fullName>
    </alternativeName>
    <allergenName>Equ c 4</allergenName>
</protein>
<evidence type="ECO:0000255" key="1"/>
<evidence type="ECO:0000269" key="2">
    <source>
    </source>
</evidence>
<evidence type="ECO:0000269" key="3">
    <source>
    </source>
</evidence>
<evidence type="ECO:0000269" key="4">
    <source>
    </source>
</evidence>
<evidence type="ECO:0000305" key="5"/>
<evidence type="ECO:0007829" key="6">
    <source>
        <dbReference type="PDB" id="3ZPM"/>
    </source>
</evidence>
<organism>
    <name type="scientific">Equus caballus</name>
    <name type="common">Horse</name>
    <dbReference type="NCBI Taxonomy" id="9796"/>
    <lineage>
        <taxon>Eukaryota</taxon>
        <taxon>Metazoa</taxon>
        <taxon>Chordata</taxon>
        <taxon>Craniata</taxon>
        <taxon>Vertebrata</taxon>
        <taxon>Euteleostomi</taxon>
        <taxon>Mammalia</taxon>
        <taxon>Eutheria</taxon>
        <taxon>Laurasiatheria</taxon>
        <taxon>Perissodactyla</taxon>
        <taxon>Equidae</taxon>
        <taxon>Equus</taxon>
    </lineage>
</organism>
<proteinExistence type="evidence at protein level"/>
<accession>P82615</accession>
<accession>P82616</accession>
<accession>Q8SPI9</accession>
<name>LATH_HORSE</name>